<dbReference type="EMBL" id="AF044312">
    <property type="protein sequence ID" value="AAC40083.1"/>
    <property type="molecule type" value="mRNA"/>
</dbReference>
<dbReference type="EMBL" id="AC153547">
    <property type="status" value="NOT_ANNOTATED_CDS"/>
    <property type="molecule type" value="Genomic_DNA"/>
</dbReference>
<dbReference type="EMBL" id="AC153550">
    <property type="status" value="NOT_ANNOTATED_CDS"/>
    <property type="molecule type" value="Genomic_DNA"/>
</dbReference>
<dbReference type="EMBL" id="AC156274">
    <property type="status" value="NOT_ANNOTATED_CDS"/>
    <property type="molecule type" value="Genomic_DNA"/>
</dbReference>
<dbReference type="EMBL" id="CH466540">
    <property type="protein sequence ID" value="EDL04798.1"/>
    <property type="molecule type" value="Genomic_DNA"/>
</dbReference>
<dbReference type="CCDS" id="CCDS23754.1"/>
<dbReference type="RefSeq" id="NP_001186194.1">
    <property type="nucleotide sequence ID" value="NM_001199265.2"/>
</dbReference>
<dbReference type="RefSeq" id="NP_038539.2">
    <property type="nucleotide sequence ID" value="NM_013511.4"/>
</dbReference>
<dbReference type="SMR" id="O70318"/>
<dbReference type="BioGRID" id="199460">
    <property type="interactions" value="39"/>
</dbReference>
<dbReference type="FunCoup" id="O70318">
    <property type="interactions" value="2901"/>
</dbReference>
<dbReference type="IntAct" id="O70318">
    <property type="interactions" value="8"/>
</dbReference>
<dbReference type="STRING" id="10090.ENSMUSP00000055122"/>
<dbReference type="GlyGen" id="O70318">
    <property type="glycosylation" value="2 sites, 1 O-linked glycan (2 sites)"/>
</dbReference>
<dbReference type="iPTMnet" id="O70318"/>
<dbReference type="PhosphoSitePlus" id="O70318"/>
<dbReference type="SwissPalm" id="O70318"/>
<dbReference type="jPOST" id="O70318"/>
<dbReference type="PaxDb" id="10090-ENSMUSP00000055122"/>
<dbReference type="PeptideAtlas" id="O70318"/>
<dbReference type="ProteomicsDB" id="277537"/>
<dbReference type="Pumba" id="O70318"/>
<dbReference type="Antibodypedia" id="1358">
    <property type="antibodies" value="245 antibodies from 34 providers"/>
</dbReference>
<dbReference type="DNASU" id="13822"/>
<dbReference type="Ensembl" id="ENSMUST00000053748.16">
    <property type="protein sequence ID" value="ENSMUSP00000055122.9"/>
    <property type="gene ID" value="ENSMUSG00000019978.17"/>
</dbReference>
<dbReference type="Ensembl" id="ENSMUST00000092645.7">
    <property type="protein sequence ID" value="ENSMUSP00000090314.7"/>
    <property type="gene ID" value="ENSMUSG00000019978.17"/>
</dbReference>
<dbReference type="GeneID" id="13822"/>
<dbReference type="KEGG" id="mmu:13822"/>
<dbReference type="UCSC" id="uc007erk.2">
    <property type="organism name" value="mouse"/>
</dbReference>
<dbReference type="AGR" id="MGI:103009"/>
<dbReference type="CTD" id="2037"/>
<dbReference type="MGI" id="MGI:103009">
    <property type="gene designation" value="Epb41l2"/>
</dbReference>
<dbReference type="VEuPathDB" id="HostDB:ENSMUSG00000019978"/>
<dbReference type="eggNOG" id="KOG3527">
    <property type="taxonomic scope" value="Eukaryota"/>
</dbReference>
<dbReference type="GeneTree" id="ENSGT00940000155617"/>
<dbReference type="HOGENOM" id="CLU_003623_0_0_1"/>
<dbReference type="InParanoid" id="O70318"/>
<dbReference type="OMA" id="LMLEXSS"/>
<dbReference type="OrthoDB" id="6589456at2759"/>
<dbReference type="PhylomeDB" id="O70318"/>
<dbReference type="TreeFam" id="TF351626"/>
<dbReference type="Reactome" id="R-MMU-6794361">
    <property type="pathway name" value="Neurexins and neuroligins"/>
</dbReference>
<dbReference type="BioGRID-ORCS" id="13822">
    <property type="hits" value="0 hits in 46 CRISPR screens"/>
</dbReference>
<dbReference type="CD-CODE" id="CE726F99">
    <property type="entry name" value="Postsynaptic density"/>
</dbReference>
<dbReference type="ChiTaRS" id="Epb41l2">
    <property type="organism name" value="mouse"/>
</dbReference>
<dbReference type="PRO" id="PR:O70318"/>
<dbReference type="Proteomes" id="UP000000589">
    <property type="component" value="Chromosome 10"/>
</dbReference>
<dbReference type="RNAct" id="O70318">
    <property type="molecule type" value="protein"/>
</dbReference>
<dbReference type="Bgee" id="ENSMUSG00000019978">
    <property type="expression patterns" value="Expressed in retinal neural layer and 279 other cell types or tissues"/>
</dbReference>
<dbReference type="ExpressionAtlas" id="O70318">
    <property type="expression patterns" value="baseline and differential"/>
</dbReference>
<dbReference type="GO" id="GO:0015629">
    <property type="term" value="C:actin cytoskeleton"/>
    <property type="evidence" value="ECO:0000250"/>
    <property type="project" value="MGI"/>
</dbReference>
<dbReference type="GO" id="GO:0005938">
    <property type="term" value="C:cell cortex"/>
    <property type="evidence" value="ECO:0000250"/>
    <property type="project" value="UniProtKB"/>
</dbReference>
<dbReference type="GO" id="GO:0030054">
    <property type="term" value="C:cell junction"/>
    <property type="evidence" value="ECO:0007669"/>
    <property type="project" value="Ensembl"/>
</dbReference>
<dbReference type="GO" id="GO:0008180">
    <property type="term" value="C:COP9 signalosome"/>
    <property type="evidence" value="ECO:0007669"/>
    <property type="project" value="Ensembl"/>
</dbReference>
<dbReference type="GO" id="GO:0005654">
    <property type="term" value="C:nucleoplasm"/>
    <property type="evidence" value="ECO:0007669"/>
    <property type="project" value="Ensembl"/>
</dbReference>
<dbReference type="GO" id="GO:0005886">
    <property type="term" value="C:plasma membrane"/>
    <property type="evidence" value="ECO:0007669"/>
    <property type="project" value="UniProtKB-SubCell"/>
</dbReference>
<dbReference type="GO" id="GO:0003779">
    <property type="term" value="F:actin binding"/>
    <property type="evidence" value="ECO:0000250"/>
    <property type="project" value="MGI"/>
</dbReference>
<dbReference type="GO" id="GO:0042731">
    <property type="term" value="F:PH domain binding"/>
    <property type="evidence" value="ECO:0000314"/>
    <property type="project" value="MGI"/>
</dbReference>
<dbReference type="GO" id="GO:0030507">
    <property type="term" value="F:spectrin binding"/>
    <property type="evidence" value="ECO:0000314"/>
    <property type="project" value="MGI"/>
</dbReference>
<dbReference type="GO" id="GO:0005198">
    <property type="term" value="F:structural molecule activity"/>
    <property type="evidence" value="ECO:0007669"/>
    <property type="project" value="InterPro"/>
</dbReference>
<dbReference type="GO" id="GO:0030036">
    <property type="term" value="P:actin cytoskeleton organization"/>
    <property type="evidence" value="ECO:0000250"/>
    <property type="project" value="MGI"/>
</dbReference>
<dbReference type="GO" id="GO:0051301">
    <property type="term" value="P:cell division"/>
    <property type="evidence" value="ECO:0007669"/>
    <property type="project" value="UniProtKB-KW"/>
</dbReference>
<dbReference type="GO" id="GO:0030866">
    <property type="term" value="P:cortical actin cytoskeleton organization"/>
    <property type="evidence" value="ECO:0007669"/>
    <property type="project" value="InterPro"/>
</dbReference>
<dbReference type="GO" id="GO:1904778">
    <property type="term" value="P:positive regulation of protein localization to cell cortex"/>
    <property type="evidence" value="ECO:0000250"/>
    <property type="project" value="UniProtKB"/>
</dbReference>
<dbReference type="GO" id="GO:0008360">
    <property type="term" value="P:regulation of cell shape"/>
    <property type="evidence" value="ECO:0000250"/>
    <property type="project" value="MGI"/>
</dbReference>
<dbReference type="CDD" id="cd14473">
    <property type="entry name" value="FERM_B-lobe"/>
    <property type="match status" value="1"/>
</dbReference>
<dbReference type="CDD" id="cd13184">
    <property type="entry name" value="FERM_C_4_1_family"/>
    <property type="match status" value="1"/>
</dbReference>
<dbReference type="FunFam" id="1.20.80.10:FF:000001">
    <property type="entry name" value="Erythrocyte membrane protein band 4.1"/>
    <property type="match status" value="1"/>
</dbReference>
<dbReference type="FunFam" id="2.30.29.30:FF:000001">
    <property type="entry name" value="Erythrocyte membrane protein band 4.1"/>
    <property type="match status" value="1"/>
</dbReference>
<dbReference type="FunFam" id="3.10.20.90:FF:000002">
    <property type="entry name" value="Erythrocyte protein band 4.1-like 3"/>
    <property type="match status" value="1"/>
</dbReference>
<dbReference type="Gene3D" id="1.20.80.10">
    <property type="match status" value="1"/>
</dbReference>
<dbReference type="Gene3D" id="3.10.20.90">
    <property type="entry name" value="Phosphatidylinositol 3-kinase Catalytic Subunit, Chain A, domain 1"/>
    <property type="match status" value="1"/>
</dbReference>
<dbReference type="Gene3D" id="2.30.29.30">
    <property type="entry name" value="Pleckstrin-homology domain (PH domain)/Phosphotyrosine-binding domain (PTB)"/>
    <property type="match status" value="1"/>
</dbReference>
<dbReference type="InterPro" id="IPR008379">
    <property type="entry name" value="Band_4.1_C"/>
</dbReference>
<dbReference type="InterPro" id="IPR019749">
    <property type="entry name" value="Band_41_domain"/>
</dbReference>
<dbReference type="InterPro" id="IPR000798">
    <property type="entry name" value="Ez/rad/moesin-like"/>
</dbReference>
<dbReference type="InterPro" id="IPR014847">
    <property type="entry name" value="FA"/>
</dbReference>
<dbReference type="InterPro" id="IPR014352">
    <property type="entry name" value="FERM/acyl-CoA-bd_prot_sf"/>
</dbReference>
<dbReference type="InterPro" id="IPR035963">
    <property type="entry name" value="FERM_2"/>
</dbReference>
<dbReference type="InterPro" id="IPR019748">
    <property type="entry name" value="FERM_central"/>
</dbReference>
<dbReference type="InterPro" id="IPR019747">
    <property type="entry name" value="FERM_CS"/>
</dbReference>
<dbReference type="InterPro" id="IPR000299">
    <property type="entry name" value="FERM_domain"/>
</dbReference>
<dbReference type="InterPro" id="IPR018979">
    <property type="entry name" value="FERM_N"/>
</dbReference>
<dbReference type="InterPro" id="IPR018980">
    <property type="entry name" value="FERM_PH-like_C"/>
</dbReference>
<dbReference type="InterPro" id="IPR011993">
    <property type="entry name" value="PH-like_dom_sf"/>
</dbReference>
<dbReference type="InterPro" id="IPR007477">
    <property type="entry name" value="SAB_dom"/>
</dbReference>
<dbReference type="InterPro" id="IPR029071">
    <property type="entry name" value="Ubiquitin-like_domsf"/>
</dbReference>
<dbReference type="PANTHER" id="PTHR23280">
    <property type="entry name" value="4.1 G PROTEIN"/>
    <property type="match status" value="1"/>
</dbReference>
<dbReference type="PANTHER" id="PTHR23280:SF17">
    <property type="entry name" value="BAND 4.1-LIKE PROTEIN 2"/>
    <property type="match status" value="1"/>
</dbReference>
<dbReference type="Pfam" id="PF05902">
    <property type="entry name" value="4_1_CTD"/>
    <property type="match status" value="1"/>
</dbReference>
<dbReference type="Pfam" id="PF08736">
    <property type="entry name" value="FA"/>
    <property type="match status" value="1"/>
</dbReference>
<dbReference type="Pfam" id="PF09380">
    <property type="entry name" value="FERM_C"/>
    <property type="match status" value="1"/>
</dbReference>
<dbReference type="Pfam" id="PF00373">
    <property type="entry name" value="FERM_M"/>
    <property type="match status" value="1"/>
</dbReference>
<dbReference type="Pfam" id="PF09379">
    <property type="entry name" value="FERM_N"/>
    <property type="match status" value="1"/>
</dbReference>
<dbReference type="Pfam" id="PF04382">
    <property type="entry name" value="SAB"/>
    <property type="match status" value="1"/>
</dbReference>
<dbReference type="PIRSF" id="PIRSF002304">
    <property type="entry name" value="Membrane_skeletal_4_1"/>
    <property type="match status" value="1"/>
</dbReference>
<dbReference type="PRINTS" id="PR00935">
    <property type="entry name" value="BAND41"/>
</dbReference>
<dbReference type="PRINTS" id="PR00661">
    <property type="entry name" value="ERMFAMILY"/>
</dbReference>
<dbReference type="SMART" id="SM00295">
    <property type="entry name" value="B41"/>
    <property type="match status" value="1"/>
</dbReference>
<dbReference type="SMART" id="SM01195">
    <property type="entry name" value="FA"/>
    <property type="match status" value="1"/>
</dbReference>
<dbReference type="SMART" id="SM01196">
    <property type="entry name" value="FERM_C"/>
    <property type="match status" value="1"/>
</dbReference>
<dbReference type="SUPFAM" id="SSF50729">
    <property type="entry name" value="PH domain-like"/>
    <property type="match status" value="1"/>
</dbReference>
<dbReference type="SUPFAM" id="SSF47031">
    <property type="entry name" value="Second domain of FERM"/>
    <property type="match status" value="1"/>
</dbReference>
<dbReference type="SUPFAM" id="SSF54236">
    <property type="entry name" value="Ubiquitin-like"/>
    <property type="match status" value="1"/>
</dbReference>
<dbReference type="PROSITE" id="PS00660">
    <property type="entry name" value="FERM_1"/>
    <property type="match status" value="1"/>
</dbReference>
<dbReference type="PROSITE" id="PS00661">
    <property type="entry name" value="FERM_2"/>
    <property type="match status" value="1"/>
</dbReference>
<dbReference type="PROSITE" id="PS50057">
    <property type="entry name" value="FERM_3"/>
    <property type="match status" value="1"/>
</dbReference>
<protein>
    <recommendedName>
        <fullName>Band 4.1-like protein 2</fullName>
    </recommendedName>
    <alternativeName>
        <fullName evidence="7">Erythrocyte membrane protein band 4.1-like 2</fullName>
    </alternativeName>
    <alternativeName>
        <fullName>Generally expressed protein 4.1</fullName>
        <shortName>4.1G</shortName>
    </alternativeName>
</protein>
<name>E41L2_MOUSE</name>
<comment type="function">
    <text evidence="2">Required for dynein-dynactin complex and NUMA1 recruitment at the mitotic cell cortex during anaphase.</text>
</comment>
<comment type="subunit">
    <text evidence="2 5">Interacts with FCGR1A. Interacts with TRPC4 (By similarity). Interacts (via CTD domain) with FKBP2 (PubMed:9531554). Interacts with NUMA1; this interaction is negatively regulated by CDK1 during metaphase and promotes anaphase-specific localization of NUMA1 in symmetrically dividing cells (By similarity).</text>
</comment>
<comment type="interaction">
    <interactant intactId="EBI-643339">
        <id>O70318</id>
    </interactant>
    <interactant intactId="EBI-771456">
        <id>Q9JLB0</id>
        <label>Pals2</label>
    </interactant>
    <organismsDiffer>false</organismsDiffer>
    <experiments>3</experiments>
</comment>
<comment type="subcellular location">
    <subcellularLocation>
        <location evidence="1">Cytoplasm</location>
        <location evidence="1">Cytoskeleton</location>
    </subcellularLocation>
    <subcellularLocation>
        <location evidence="2">Cytoplasm</location>
        <location evidence="2">Cell cortex</location>
    </subcellularLocation>
    <subcellularLocation>
        <location evidence="2">Cell membrane</location>
    </subcellularLocation>
</comment>
<comment type="tissue specificity">
    <text>Widely expressed.</text>
</comment>
<gene>
    <name evidence="7" type="primary">Epb41l2</name>
    <name evidence="7" type="synonym">Epb4.1l2</name>
</gene>
<feature type="initiator methionine" description="Removed" evidence="2">
    <location>
        <position position="1"/>
    </location>
</feature>
<feature type="chain" id="PRO_0000219398" description="Band 4.1-like protein 2">
    <location>
        <begin position="2"/>
        <end position="988"/>
    </location>
</feature>
<feature type="domain" description="FERM" evidence="3">
    <location>
        <begin position="211"/>
        <end position="492"/>
    </location>
</feature>
<feature type="region of interest" description="Disordered" evidence="4">
    <location>
        <begin position="1"/>
        <end position="190"/>
    </location>
</feature>
<feature type="region of interest" description="Hydrophilic">
    <location>
        <begin position="495"/>
        <end position="651"/>
    </location>
</feature>
<feature type="region of interest" description="Disordered" evidence="4">
    <location>
        <begin position="514"/>
        <end position="594"/>
    </location>
</feature>
<feature type="region of interest" description="Disordered" evidence="4">
    <location>
        <begin position="639"/>
        <end position="788"/>
    </location>
</feature>
<feature type="region of interest" description="Spectrin--actin-binding">
    <location>
        <begin position="652"/>
        <end position="837"/>
    </location>
</feature>
<feature type="region of interest" description="Disordered" evidence="4">
    <location>
        <begin position="804"/>
        <end position="839"/>
    </location>
</feature>
<feature type="region of interest" description="C-terminal (CTD)">
    <location>
        <begin position="838"/>
        <end position="988"/>
    </location>
</feature>
<feature type="compositionally biased region" description="Basic and acidic residues" evidence="4">
    <location>
        <begin position="22"/>
        <end position="31"/>
    </location>
</feature>
<feature type="compositionally biased region" description="Basic and acidic residues" evidence="4">
    <location>
        <begin position="110"/>
        <end position="148"/>
    </location>
</feature>
<feature type="compositionally biased region" description="Basic and acidic residues" evidence="4">
    <location>
        <begin position="160"/>
        <end position="190"/>
    </location>
</feature>
<feature type="compositionally biased region" description="Low complexity" evidence="4">
    <location>
        <begin position="555"/>
        <end position="567"/>
    </location>
</feature>
<feature type="compositionally biased region" description="Basic and acidic residues" evidence="4">
    <location>
        <begin position="673"/>
        <end position="686"/>
    </location>
</feature>
<feature type="compositionally biased region" description="Basic and acidic residues" evidence="4">
    <location>
        <begin position="704"/>
        <end position="717"/>
    </location>
</feature>
<feature type="compositionally biased region" description="Low complexity" evidence="4">
    <location>
        <begin position="718"/>
        <end position="729"/>
    </location>
</feature>
<feature type="compositionally biased region" description="Basic and acidic residues" evidence="4">
    <location>
        <begin position="739"/>
        <end position="751"/>
    </location>
</feature>
<feature type="compositionally biased region" description="Acidic residues" evidence="4">
    <location>
        <begin position="752"/>
        <end position="764"/>
    </location>
</feature>
<feature type="compositionally biased region" description="Basic and acidic residues" evidence="4">
    <location>
        <begin position="828"/>
        <end position="839"/>
    </location>
</feature>
<feature type="modified residue" description="N-acetylthreonine" evidence="2">
    <location>
        <position position="2"/>
    </location>
</feature>
<feature type="modified residue" description="Phosphoserine" evidence="2">
    <location>
        <position position="7"/>
    </location>
</feature>
<feature type="modified residue" description="Phosphoserine" evidence="9 10">
    <location>
        <position position="38"/>
    </location>
</feature>
<feature type="modified residue" description="Phosphoserine" evidence="10">
    <location>
        <position position="86"/>
    </location>
</feature>
<feature type="modified residue" description="Phosphoserine" evidence="11">
    <location>
        <position position="116"/>
    </location>
</feature>
<feature type="modified residue" description="Phosphoserine" evidence="10 11">
    <location>
        <position position="201"/>
    </location>
</feature>
<feature type="modified residue" description="Phosphoserine" evidence="2">
    <location>
        <position position="379"/>
    </location>
</feature>
<feature type="modified residue" description="Phosphoserine" evidence="11">
    <location>
        <position position="395"/>
    </location>
</feature>
<feature type="modified residue" description="Phosphoserine" evidence="2">
    <location>
        <position position="492"/>
    </location>
</feature>
<feature type="modified residue" description="Phosphoserine" evidence="11">
    <location>
        <position position="543"/>
    </location>
</feature>
<feature type="modified residue" description="Phosphoserine" evidence="11">
    <location>
        <position position="555"/>
    </location>
</feature>
<feature type="modified residue" description="Phosphoserine" evidence="11">
    <location>
        <position position="561"/>
    </location>
</feature>
<feature type="modified residue" description="Phosphoserine" evidence="10 11">
    <location>
        <position position="582"/>
    </location>
</feature>
<feature type="modified residue" description="Phosphotyrosine" evidence="8 9">
    <location>
        <position position="606"/>
    </location>
</feature>
<feature type="modified residue" description="Phosphoserine" evidence="11">
    <location>
        <position position="610"/>
    </location>
</feature>
<feature type="modified residue" description="Phosphoserine" evidence="11">
    <location>
        <position position="630"/>
    </location>
</feature>
<feature type="modified residue" description="Phosphoserine" evidence="10">
    <location>
        <position position="698"/>
    </location>
</feature>
<feature type="modified residue" description="Phosphothreonine" evidence="11">
    <location>
        <position position="745"/>
    </location>
</feature>
<feature type="sequence conflict" description="In Ref. 1; AAC40083." evidence="6" ref="1">
    <original>F</original>
    <variation>L</variation>
    <location>
        <position position="660"/>
    </location>
</feature>
<feature type="sequence conflict" description="In Ref. 1; AAC40083." evidence="6" ref="1">
    <original>E</original>
    <variation>G</variation>
    <location>
        <position position="680"/>
    </location>
</feature>
<proteinExistence type="evidence at protein level"/>
<accession>O70318</accession>
<accession>G3X9B8</accession>
<evidence type="ECO:0000250" key="1"/>
<evidence type="ECO:0000250" key="2">
    <source>
        <dbReference type="UniProtKB" id="O43491"/>
    </source>
</evidence>
<evidence type="ECO:0000255" key="3">
    <source>
        <dbReference type="PROSITE-ProRule" id="PRU00084"/>
    </source>
</evidence>
<evidence type="ECO:0000256" key="4">
    <source>
        <dbReference type="SAM" id="MobiDB-lite"/>
    </source>
</evidence>
<evidence type="ECO:0000269" key="5">
    <source>
    </source>
</evidence>
<evidence type="ECO:0000305" key="6"/>
<evidence type="ECO:0000312" key="7">
    <source>
        <dbReference type="MGI" id="MGI:103009"/>
    </source>
</evidence>
<evidence type="ECO:0007744" key="8">
    <source>
    </source>
</evidence>
<evidence type="ECO:0007744" key="9">
    <source>
    </source>
</evidence>
<evidence type="ECO:0007744" key="10">
    <source>
    </source>
</evidence>
<evidence type="ECO:0007744" key="11">
    <source>
    </source>
</evidence>
<reference key="1">
    <citation type="journal article" date="1998" name="J. Cell Biol.">
        <title>The 13-kD FK506 binding protein, FKBP13, interacts with a novel homologue of the erythrocyte membrane cytoskeletal protein 4.1.</title>
        <authorList>
            <person name="Walensky L.D."/>
            <person name="Gascard P."/>
            <person name="Fields M.E."/>
            <person name="Blackshaw S."/>
            <person name="Conboy J.G."/>
            <person name="Mohandas N."/>
            <person name="Snyder S.H."/>
        </authorList>
    </citation>
    <scope>NUCLEOTIDE SEQUENCE [MRNA]</scope>
    <scope>INTERACTION WITH FKBP2</scope>
    <source>
        <tissue>Brain</tissue>
    </source>
</reference>
<reference key="2">
    <citation type="journal article" date="2009" name="PLoS Biol.">
        <title>Lineage-specific biology revealed by a finished genome assembly of the mouse.</title>
        <authorList>
            <person name="Church D.M."/>
            <person name="Goodstadt L."/>
            <person name="Hillier L.W."/>
            <person name="Zody M.C."/>
            <person name="Goldstein S."/>
            <person name="She X."/>
            <person name="Bult C.J."/>
            <person name="Agarwala R."/>
            <person name="Cherry J.L."/>
            <person name="DiCuccio M."/>
            <person name="Hlavina W."/>
            <person name="Kapustin Y."/>
            <person name="Meric P."/>
            <person name="Maglott D."/>
            <person name="Birtle Z."/>
            <person name="Marques A.C."/>
            <person name="Graves T."/>
            <person name="Zhou S."/>
            <person name="Teague B."/>
            <person name="Potamousis K."/>
            <person name="Churas C."/>
            <person name="Place M."/>
            <person name="Herschleb J."/>
            <person name="Runnheim R."/>
            <person name="Forrest D."/>
            <person name="Amos-Landgraf J."/>
            <person name="Schwartz D.C."/>
            <person name="Cheng Z."/>
            <person name="Lindblad-Toh K."/>
            <person name="Eichler E.E."/>
            <person name="Ponting C.P."/>
        </authorList>
    </citation>
    <scope>NUCLEOTIDE SEQUENCE [LARGE SCALE GENOMIC DNA]</scope>
    <source>
        <strain>C57BL/6J</strain>
    </source>
</reference>
<reference key="3">
    <citation type="submission" date="2005-07" db="EMBL/GenBank/DDBJ databases">
        <authorList>
            <person name="Mural R.J."/>
            <person name="Adams M.D."/>
            <person name="Myers E.W."/>
            <person name="Smith H.O."/>
            <person name="Venter J.C."/>
        </authorList>
    </citation>
    <scope>NUCLEOTIDE SEQUENCE [LARGE SCALE GENOMIC DNA]</scope>
</reference>
<reference key="4">
    <citation type="journal article" date="2005" name="Nat. Biotechnol.">
        <title>Immunoaffinity profiling of tyrosine phosphorylation in cancer cells.</title>
        <authorList>
            <person name="Rush J."/>
            <person name="Moritz A."/>
            <person name="Lee K.A."/>
            <person name="Guo A."/>
            <person name="Goss V.L."/>
            <person name="Spek E.J."/>
            <person name="Zhang H."/>
            <person name="Zha X.-M."/>
            <person name="Polakiewicz R.D."/>
            <person name="Comb M.J."/>
        </authorList>
    </citation>
    <scope>PHOSPHORYLATION [LARGE SCALE ANALYSIS] AT TYR-606</scope>
    <scope>IDENTIFICATION BY MASS SPECTROMETRY [LARGE SCALE ANALYSIS]</scope>
</reference>
<reference key="5">
    <citation type="journal article" date="2007" name="Proc. Natl. Acad. Sci. U.S.A.">
        <title>Large-scale phosphorylation analysis of mouse liver.</title>
        <authorList>
            <person name="Villen J."/>
            <person name="Beausoleil S.A."/>
            <person name="Gerber S.A."/>
            <person name="Gygi S.P."/>
        </authorList>
    </citation>
    <scope>IDENTIFICATION BY MASS SPECTROMETRY [LARGE SCALE ANALYSIS]</scope>
    <source>
        <tissue>Liver</tissue>
    </source>
</reference>
<reference key="6">
    <citation type="journal article" date="2009" name="Immunity">
        <title>The phagosomal proteome in interferon-gamma-activated macrophages.</title>
        <authorList>
            <person name="Trost M."/>
            <person name="English L."/>
            <person name="Lemieux S."/>
            <person name="Courcelles M."/>
            <person name="Desjardins M."/>
            <person name="Thibault P."/>
        </authorList>
    </citation>
    <scope>PHOSPHORYLATION [LARGE SCALE ANALYSIS] AT SER-38; SER-86; SER-201; SER-582 AND SER-698</scope>
    <scope>IDENTIFICATION BY MASS SPECTROMETRY [LARGE SCALE ANALYSIS]</scope>
</reference>
<reference key="7">
    <citation type="journal article" date="2009" name="Mol. Cell. Proteomics">
        <title>Large scale localization of protein phosphorylation by use of electron capture dissociation mass spectrometry.</title>
        <authorList>
            <person name="Sweet S.M."/>
            <person name="Bailey C.M."/>
            <person name="Cunningham D.L."/>
            <person name="Heath J.K."/>
            <person name="Cooper H.J."/>
        </authorList>
    </citation>
    <scope>PHOSPHORYLATION [LARGE SCALE ANALYSIS] AT SER-38 AND TYR-606</scope>
    <scope>IDENTIFICATION BY MASS SPECTROMETRY [LARGE SCALE ANALYSIS]</scope>
    <source>
        <tissue>Embryonic fibroblast</tissue>
    </source>
</reference>
<reference key="8">
    <citation type="journal article" date="2010" name="Cell">
        <title>A tissue-specific atlas of mouse protein phosphorylation and expression.</title>
        <authorList>
            <person name="Huttlin E.L."/>
            <person name="Jedrychowski M.P."/>
            <person name="Elias J.E."/>
            <person name="Goswami T."/>
            <person name="Rad R."/>
            <person name="Beausoleil S.A."/>
            <person name="Villen J."/>
            <person name="Haas W."/>
            <person name="Sowa M.E."/>
            <person name="Gygi S.P."/>
        </authorList>
    </citation>
    <scope>PHOSPHORYLATION [LARGE SCALE ANALYSIS] AT SER-116; SER-201; SER-395; SER-543; SER-555; SER-561; SER-582; SER-610; SER-630 AND THR-745</scope>
    <scope>IDENTIFICATION BY MASS SPECTROMETRY [LARGE SCALE ANALYSIS]</scope>
    <source>
        <tissue>Brain</tissue>
        <tissue>Brown adipose tissue</tissue>
        <tissue>Heart</tissue>
        <tissue>Kidney</tissue>
        <tissue>Liver</tissue>
        <tissue>Lung</tissue>
        <tissue>Pancreas</tissue>
        <tissue>Spleen</tissue>
        <tissue>Testis</tissue>
    </source>
</reference>
<organism>
    <name type="scientific">Mus musculus</name>
    <name type="common">Mouse</name>
    <dbReference type="NCBI Taxonomy" id="10090"/>
    <lineage>
        <taxon>Eukaryota</taxon>
        <taxon>Metazoa</taxon>
        <taxon>Chordata</taxon>
        <taxon>Craniata</taxon>
        <taxon>Vertebrata</taxon>
        <taxon>Euteleostomi</taxon>
        <taxon>Mammalia</taxon>
        <taxon>Eutheria</taxon>
        <taxon>Euarchontoglires</taxon>
        <taxon>Glires</taxon>
        <taxon>Rodentia</taxon>
        <taxon>Myomorpha</taxon>
        <taxon>Muroidea</taxon>
        <taxon>Muridae</taxon>
        <taxon>Murinae</taxon>
        <taxon>Mus</taxon>
        <taxon>Mus</taxon>
    </lineage>
</organism>
<keyword id="KW-0007">Acetylation</keyword>
<keyword id="KW-0009">Actin-binding</keyword>
<keyword id="KW-0131">Cell cycle</keyword>
<keyword id="KW-0132">Cell division</keyword>
<keyword id="KW-1003">Cell membrane</keyword>
<keyword id="KW-0963">Cytoplasm</keyword>
<keyword id="KW-0206">Cytoskeleton</keyword>
<keyword id="KW-0472">Membrane</keyword>
<keyword id="KW-0498">Mitosis</keyword>
<keyword id="KW-0597">Phosphoprotein</keyword>
<keyword id="KW-1185">Reference proteome</keyword>
<keyword id="KW-0813">Transport</keyword>
<sequence length="988" mass="109940">MTTEVGSASEVKKGSDQAGADASKEKAKEVENEQTPVSEPEEEKGSQPGPPVERQSTPRLRKRGKDPSENRGISRFIPPWLKKQRSYNLVVAKDGGDKKEPTQADVEDQILGKEESLPEEESRAKGDAEEMAQRKHLEVQVEVREAKPALKSSVETQPAEEVRKDKEETIQDTQEEKLEGGAAKRETKEVQTSELKAEVASQKATKKTKTVLAKVTLLDGTEYSCDLEKRAKGQVLFDRVCEHLNLLEKDYFGLLFQDHPEQKNWLDPAKEIKRQLKNLPWLFTFNVKFYPPDPSQLTEDITRYFLCLQLRQDIASGRLPCSFVTHALLGSYTLQAEHGDYDPEEYDSIDLGDFQFAPAHTKELEEKVSELHKTHRGLSPAQADSQFLENAKRLSMYGVDLHHAKDSEGVDIKLGVCANGLLIYKDRLRINRFAWPKILKISYKRSNFYIKVRPAELEQFESTIGFKLPNHRAAKRLWKVCVEHHTFYRLVSPEQPPKTKFLTLGSKFRYSGRTQAQTREASTLIDRPAPQFERASSKRVSRSLDGAPIGVVDQSPPGEGSVPGPGVISYTTIQDGRRDSKSPTKATPLPAEGKKNTLRVDGDNIYVRHSNLMLEDLDKAQEAILKHQASISELKRNFMASTPEPRPSEWEKRRVTPLPFQPQASSHETLNVVEEKKRAEVGKDESVITEEMNGKEMSPGHGPGETRKVEPVAHKDSTSLSSESSSSSSESEEDVGEYQPHHRVTEGTIREEQEECDEELEEEPGQGAKVVEREAAVPDAVPDRQAGASVLPVETEAQEHVVAQKLPGEKGAHGGTAEQDPREEAEEDPHRVNGEVPHLDLDGLPEIICCSEPPVVKTEMVTISDASQRTEISTKEVPIVQTETKTITYESPQIDGGAGGDSGVLLTAQTITSESASTTTTTHITKTVKGGISETRIEKRIVITGDAALDHDQALAQAIREAREQHPDMSVTRVVVHKETELAEEGEE</sequence>